<sequence length="225" mass="25003">MKKNVQIKGTKSGISIFLSDKASISELQQELSQLLADQKQNPYSGEKLEVQVQIGNRLFSEEEEREISTIIHNNSQMKISAFYSNVMSKDEAKKWKENDQIFSMATIIRSGQVVQVPGDFLLIGDVNPGGQIRSNGNVFVLGNIKGIIHAGFEGDENAVVAGKFLYPSQVRIAGKVYGFDSEDYKEVADTDLFSAFVNDAGEIVIDEIHKIRKIRPEISNFQGGR</sequence>
<reference key="1">
    <citation type="journal article" date="2001" name="Science">
        <title>Comparative genomics of Listeria species.</title>
        <authorList>
            <person name="Glaser P."/>
            <person name="Frangeul L."/>
            <person name="Buchrieser C."/>
            <person name="Rusniok C."/>
            <person name="Amend A."/>
            <person name="Baquero F."/>
            <person name="Berche P."/>
            <person name="Bloecker H."/>
            <person name="Brandt P."/>
            <person name="Chakraborty T."/>
            <person name="Charbit A."/>
            <person name="Chetouani F."/>
            <person name="Couve E."/>
            <person name="de Daruvar A."/>
            <person name="Dehoux P."/>
            <person name="Domann E."/>
            <person name="Dominguez-Bernal G."/>
            <person name="Duchaud E."/>
            <person name="Durant L."/>
            <person name="Dussurget O."/>
            <person name="Entian K.-D."/>
            <person name="Fsihi H."/>
            <person name="Garcia-del Portillo F."/>
            <person name="Garrido P."/>
            <person name="Gautier L."/>
            <person name="Goebel W."/>
            <person name="Gomez-Lopez N."/>
            <person name="Hain T."/>
            <person name="Hauf J."/>
            <person name="Jackson D."/>
            <person name="Jones L.-M."/>
            <person name="Kaerst U."/>
            <person name="Kreft J."/>
            <person name="Kuhn M."/>
            <person name="Kunst F."/>
            <person name="Kurapkat G."/>
            <person name="Madueno E."/>
            <person name="Maitournam A."/>
            <person name="Mata Vicente J."/>
            <person name="Ng E."/>
            <person name="Nedjari H."/>
            <person name="Nordsiek G."/>
            <person name="Novella S."/>
            <person name="de Pablos B."/>
            <person name="Perez-Diaz J.-C."/>
            <person name="Purcell R."/>
            <person name="Remmel B."/>
            <person name="Rose M."/>
            <person name="Schlueter T."/>
            <person name="Simoes N."/>
            <person name="Tierrez A."/>
            <person name="Vazquez-Boland J.-A."/>
            <person name="Voss H."/>
            <person name="Wehland J."/>
            <person name="Cossart P."/>
        </authorList>
    </citation>
    <scope>NUCLEOTIDE SEQUENCE [LARGE SCALE GENOMIC DNA]</scope>
    <source>
        <strain>ATCC BAA-680 / CLIP 11262</strain>
    </source>
</reference>
<proteinExistence type="inferred from homology"/>
<organism>
    <name type="scientific">Listeria innocua serovar 6a (strain ATCC BAA-680 / CLIP 11262)</name>
    <dbReference type="NCBI Taxonomy" id="272626"/>
    <lineage>
        <taxon>Bacteria</taxon>
        <taxon>Bacillati</taxon>
        <taxon>Bacillota</taxon>
        <taxon>Bacilli</taxon>
        <taxon>Bacillales</taxon>
        <taxon>Listeriaceae</taxon>
        <taxon>Listeria</taxon>
    </lineage>
</organism>
<protein>
    <recommendedName>
        <fullName>Probable septum site-determining protein MinC</fullName>
    </recommendedName>
</protein>
<name>MINC_LISIN</name>
<gene>
    <name type="primary">minC</name>
    <name type="ordered locus">lin1580</name>
</gene>
<dbReference type="EMBL" id="AL596169">
    <property type="protein sequence ID" value="CAC96811.1"/>
    <property type="molecule type" value="Genomic_DNA"/>
</dbReference>
<dbReference type="PIR" id="AC1630">
    <property type="entry name" value="AC1630"/>
</dbReference>
<dbReference type="RefSeq" id="WP_010991598.1">
    <property type="nucleotide sequence ID" value="NC_003212.1"/>
</dbReference>
<dbReference type="SMR" id="Q92BG9"/>
<dbReference type="STRING" id="272626.gene:17565911"/>
<dbReference type="DNASU" id="1130197"/>
<dbReference type="KEGG" id="lin:minC"/>
<dbReference type="eggNOG" id="COG0850">
    <property type="taxonomic scope" value="Bacteria"/>
</dbReference>
<dbReference type="HOGENOM" id="CLU_048711_1_1_9"/>
<dbReference type="OrthoDB" id="9790810at2"/>
<dbReference type="Proteomes" id="UP000002513">
    <property type="component" value="Chromosome"/>
</dbReference>
<dbReference type="GO" id="GO:0000902">
    <property type="term" value="P:cell morphogenesis"/>
    <property type="evidence" value="ECO:0007669"/>
    <property type="project" value="InterPro"/>
</dbReference>
<dbReference type="GO" id="GO:0000917">
    <property type="term" value="P:division septum assembly"/>
    <property type="evidence" value="ECO:0007669"/>
    <property type="project" value="UniProtKB-KW"/>
</dbReference>
<dbReference type="GO" id="GO:1901891">
    <property type="term" value="P:regulation of cell septum assembly"/>
    <property type="evidence" value="ECO:0007669"/>
    <property type="project" value="InterPro"/>
</dbReference>
<dbReference type="FunFam" id="2.160.20.70:FF:000013">
    <property type="entry name" value="Probable septum site-determining protein MinC"/>
    <property type="match status" value="1"/>
</dbReference>
<dbReference type="Gene3D" id="2.160.20.70">
    <property type="match status" value="1"/>
</dbReference>
<dbReference type="Gene3D" id="3.30.160.540">
    <property type="match status" value="1"/>
</dbReference>
<dbReference type="HAMAP" id="MF_00267">
    <property type="entry name" value="MinC"/>
    <property type="match status" value="1"/>
</dbReference>
<dbReference type="InterPro" id="IPR016098">
    <property type="entry name" value="CAP/MinC_C"/>
</dbReference>
<dbReference type="InterPro" id="IPR013033">
    <property type="entry name" value="MinC"/>
</dbReference>
<dbReference type="InterPro" id="IPR036145">
    <property type="entry name" value="MinC_C_sf"/>
</dbReference>
<dbReference type="InterPro" id="IPR055219">
    <property type="entry name" value="MinC_N_1"/>
</dbReference>
<dbReference type="InterPro" id="IPR005526">
    <property type="entry name" value="Septum_form_inhib_MinC_C"/>
</dbReference>
<dbReference type="NCBIfam" id="NF001772">
    <property type="entry name" value="PRK00513.1-3"/>
    <property type="match status" value="1"/>
</dbReference>
<dbReference type="PANTHER" id="PTHR34108">
    <property type="entry name" value="SEPTUM SITE-DETERMINING PROTEIN MINC"/>
    <property type="match status" value="1"/>
</dbReference>
<dbReference type="PANTHER" id="PTHR34108:SF1">
    <property type="entry name" value="SEPTUM SITE-DETERMINING PROTEIN MINC"/>
    <property type="match status" value="1"/>
</dbReference>
<dbReference type="Pfam" id="PF03775">
    <property type="entry name" value="MinC_C"/>
    <property type="match status" value="1"/>
</dbReference>
<dbReference type="Pfam" id="PF22642">
    <property type="entry name" value="MinC_N_1"/>
    <property type="match status" value="1"/>
</dbReference>
<dbReference type="SUPFAM" id="SSF63848">
    <property type="entry name" value="Cell-division inhibitor MinC, C-terminal domain"/>
    <property type="match status" value="1"/>
</dbReference>
<feature type="chain" id="PRO_0000189040" description="Probable septum site-determining protein MinC">
    <location>
        <begin position="1"/>
        <end position="225"/>
    </location>
</feature>
<accession>Q92BG9</accession>
<keyword id="KW-0131">Cell cycle</keyword>
<keyword id="KW-0132">Cell division</keyword>
<keyword id="KW-0717">Septation</keyword>
<evidence type="ECO:0000250" key="1"/>
<evidence type="ECO:0000305" key="2"/>
<comment type="function">
    <text evidence="1">Cell division inhibitor that blocks the formation of polar Z ring septums. Rapidly oscillates between the poles of the cell to destabilize FtsZ filaments that have formed before they mature into polar Z rings. Prevents FtsZ polymerization (By similarity).</text>
</comment>
<comment type="subunit">
    <text evidence="1">Interacts with MinD and FtsZ.</text>
</comment>
<comment type="similarity">
    <text evidence="2">Belongs to the MinC family.</text>
</comment>